<reference key="1">
    <citation type="journal article" date="2000" name="Nature">
        <title>Complete genome sequence of Pseudomonas aeruginosa PAO1, an opportunistic pathogen.</title>
        <authorList>
            <person name="Stover C.K."/>
            <person name="Pham X.-Q.T."/>
            <person name="Erwin A.L."/>
            <person name="Mizoguchi S.D."/>
            <person name="Warrener P."/>
            <person name="Hickey M.J."/>
            <person name="Brinkman F.S.L."/>
            <person name="Hufnagle W.O."/>
            <person name="Kowalik D.J."/>
            <person name="Lagrou M."/>
            <person name="Garber R.L."/>
            <person name="Goltry L."/>
            <person name="Tolentino E."/>
            <person name="Westbrock-Wadman S."/>
            <person name="Yuan Y."/>
            <person name="Brody L.L."/>
            <person name="Coulter S.N."/>
            <person name="Folger K.R."/>
            <person name="Kas A."/>
            <person name="Larbig K."/>
            <person name="Lim R.M."/>
            <person name="Smith K.A."/>
            <person name="Spencer D.H."/>
            <person name="Wong G.K.-S."/>
            <person name="Wu Z."/>
            <person name="Paulsen I.T."/>
            <person name="Reizer J."/>
            <person name="Saier M.H. Jr."/>
            <person name="Hancock R.E.W."/>
            <person name="Lory S."/>
            <person name="Olson M.V."/>
        </authorList>
    </citation>
    <scope>NUCLEOTIDE SEQUENCE [LARGE SCALE GENOMIC DNA]</scope>
    <source>
        <strain>ATCC 15692 / DSM 22644 / CIP 104116 / JCM 14847 / LMG 12228 / 1C / PRS 101 / PAO1</strain>
    </source>
</reference>
<protein>
    <recommendedName>
        <fullName evidence="1">Biotin synthase</fullName>
        <ecNumber evidence="1">2.8.1.6</ecNumber>
    </recommendedName>
</protein>
<organism>
    <name type="scientific">Pseudomonas aeruginosa (strain ATCC 15692 / DSM 22644 / CIP 104116 / JCM 14847 / LMG 12228 / 1C / PRS 101 / PAO1)</name>
    <dbReference type="NCBI Taxonomy" id="208964"/>
    <lineage>
        <taxon>Bacteria</taxon>
        <taxon>Pseudomonadati</taxon>
        <taxon>Pseudomonadota</taxon>
        <taxon>Gammaproteobacteria</taxon>
        <taxon>Pseudomonadales</taxon>
        <taxon>Pseudomonadaceae</taxon>
        <taxon>Pseudomonas</taxon>
    </lineage>
</organism>
<sequence length="352" mass="39114">MSATASVATRHDWSLAEVRALFEQPFNDLLFQAQTVHRAHFDPNRVQVSTLLSIKTGACPEDCKYCPQSGHYNTGLDKEKLMEVQKVLEAAAEAKAIGSTRFCMGAAWKHPSAKDMPYVLEMVKGVKKLGLETCMTLGRLTQEQTQALADAGLDYYNHNLDTSPEFYGNIITTRTYSERLQTLAYVREAGMKICSGGILGMGESVDDRAGLLIQLANLPEHPESVPINMLVKVKGTPLAEEKDVDPFDFIRTLAVARIMMPKSHVRLSAGREQMNEQMQALAFMAGANSIFYGEKLLTTKNPQAEKDMQLFARLGIKPEEREEHADEVHQAAIEQALVEQRESKLFYNAASA</sequence>
<gene>
    <name evidence="1" type="primary">bioB</name>
    <name type="ordered locus">PA0500</name>
</gene>
<dbReference type="EC" id="2.8.1.6" evidence="1"/>
<dbReference type="EMBL" id="AE004091">
    <property type="protein sequence ID" value="AAG03889.1"/>
    <property type="molecule type" value="Genomic_DNA"/>
</dbReference>
<dbReference type="PIR" id="F83582">
    <property type="entry name" value="F83582"/>
</dbReference>
<dbReference type="RefSeq" id="NP_249191.1">
    <property type="nucleotide sequence ID" value="NC_002516.2"/>
</dbReference>
<dbReference type="RefSeq" id="WP_003103330.1">
    <property type="nucleotide sequence ID" value="NZ_QZGE01000010.1"/>
</dbReference>
<dbReference type="SMR" id="Q9I618"/>
<dbReference type="FunCoup" id="Q9I618">
    <property type="interactions" value="478"/>
</dbReference>
<dbReference type="STRING" id="208964.PA0500"/>
<dbReference type="PaxDb" id="208964-PA0500"/>
<dbReference type="DNASU" id="877668"/>
<dbReference type="GeneID" id="877668"/>
<dbReference type="KEGG" id="pae:PA0500"/>
<dbReference type="PATRIC" id="fig|208964.12.peg.528"/>
<dbReference type="PseudoCAP" id="PA0500"/>
<dbReference type="HOGENOM" id="CLU_033172_1_2_6"/>
<dbReference type="InParanoid" id="Q9I618"/>
<dbReference type="OrthoDB" id="9786826at2"/>
<dbReference type="PhylomeDB" id="Q9I618"/>
<dbReference type="BioCyc" id="PAER208964:G1FZ6-505-MONOMER"/>
<dbReference type="UniPathway" id="UPA00078">
    <property type="reaction ID" value="UER00162"/>
</dbReference>
<dbReference type="Proteomes" id="UP000002438">
    <property type="component" value="Chromosome"/>
</dbReference>
<dbReference type="GO" id="GO:0051537">
    <property type="term" value="F:2 iron, 2 sulfur cluster binding"/>
    <property type="evidence" value="ECO:0000318"/>
    <property type="project" value="GO_Central"/>
</dbReference>
<dbReference type="GO" id="GO:0051539">
    <property type="term" value="F:4 iron, 4 sulfur cluster binding"/>
    <property type="evidence" value="ECO:0007669"/>
    <property type="project" value="UniProtKB-KW"/>
</dbReference>
<dbReference type="GO" id="GO:0004076">
    <property type="term" value="F:biotin synthase activity"/>
    <property type="evidence" value="ECO:0000318"/>
    <property type="project" value="GO_Central"/>
</dbReference>
<dbReference type="GO" id="GO:0005506">
    <property type="term" value="F:iron ion binding"/>
    <property type="evidence" value="ECO:0007669"/>
    <property type="project" value="UniProtKB-UniRule"/>
</dbReference>
<dbReference type="GO" id="GO:0009102">
    <property type="term" value="P:biotin biosynthetic process"/>
    <property type="evidence" value="ECO:0000318"/>
    <property type="project" value="GO_Central"/>
</dbReference>
<dbReference type="CDD" id="cd01335">
    <property type="entry name" value="Radical_SAM"/>
    <property type="match status" value="1"/>
</dbReference>
<dbReference type="FunFam" id="3.20.20.70:FF:000011">
    <property type="entry name" value="Biotin synthase"/>
    <property type="match status" value="1"/>
</dbReference>
<dbReference type="Gene3D" id="3.20.20.70">
    <property type="entry name" value="Aldolase class I"/>
    <property type="match status" value="1"/>
</dbReference>
<dbReference type="HAMAP" id="MF_01694">
    <property type="entry name" value="BioB"/>
    <property type="match status" value="1"/>
</dbReference>
<dbReference type="InterPro" id="IPR013785">
    <property type="entry name" value="Aldolase_TIM"/>
</dbReference>
<dbReference type="InterPro" id="IPR010722">
    <property type="entry name" value="BATS_dom"/>
</dbReference>
<dbReference type="InterPro" id="IPR002684">
    <property type="entry name" value="Biotin_synth/BioAB"/>
</dbReference>
<dbReference type="InterPro" id="IPR024177">
    <property type="entry name" value="Biotin_synthase"/>
</dbReference>
<dbReference type="InterPro" id="IPR006638">
    <property type="entry name" value="Elp3/MiaA/NifB-like_rSAM"/>
</dbReference>
<dbReference type="InterPro" id="IPR007197">
    <property type="entry name" value="rSAM"/>
</dbReference>
<dbReference type="NCBIfam" id="TIGR00433">
    <property type="entry name" value="bioB"/>
    <property type="match status" value="1"/>
</dbReference>
<dbReference type="PANTHER" id="PTHR22976">
    <property type="entry name" value="BIOTIN SYNTHASE"/>
    <property type="match status" value="1"/>
</dbReference>
<dbReference type="PANTHER" id="PTHR22976:SF2">
    <property type="entry name" value="BIOTIN SYNTHASE, MITOCHONDRIAL"/>
    <property type="match status" value="1"/>
</dbReference>
<dbReference type="Pfam" id="PF06968">
    <property type="entry name" value="BATS"/>
    <property type="match status" value="1"/>
</dbReference>
<dbReference type="Pfam" id="PF04055">
    <property type="entry name" value="Radical_SAM"/>
    <property type="match status" value="1"/>
</dbReference>
<dbReference type="PIRSF" id="PIRSF001619">
    <property type="entry name" value="Biotin_synth"/>
    <property type="match status" value="1"/>
</dbReference>
<dbReference type="SFLD" id="SFLDG01060">
    <property type="entry name" value="BATS_domain_containing"/>
    <property type="match status" value="1"/>
</dbReference>
<dbReference type="SFLD" id="SFLDF00272">
    <property type="entry name" value="biotin_synthase"/>
    <property type="match status" value="1"/>
</dbReference>
<dbReference type="SMART" id="SM00876">
    <property type="entry name" value="BATS"/>
    <property type="match status" value="1"/>
</dbReference>
<dbReference type="SMART" id="SM00729">
    <property type="entry name" value="Elp3"/>
    <property type="match status" value="1"/>
</dbReference>
<dbReference type="SUPFAM" id="SSF102114">
    <property type="entry name" value="Radical SAM enzymes"/>
    <property type="match status" value="1"/>
</dbReference>
<dbReference type="PROSITE" id="PS51918">
    <property type="entry name" value="RADICAL_SAM"/>
    <property type="match status" value="1"/>
</dbReference>
<proteinExistence type="inferred from homology"/>
<name>BIOB_PSEAE</name>
<comment type="function">
    <text evidence="1">Catalyzes the conversion of dethiobiotin (DTB) to biotin by the insertion of a sulfur atom into dethiobiotin via a radical-based mechanism.</text>
</comment>
<comment type="catalytic activity">
    <reaction evidence="1">
        <text>(4R,5S)-dethiobiotin + (sulfur carrier)-SH + 2 reduced [2Fe-2S]-[ferredoxin] + 2 S-adenosyl-L-methionine = (sulfur carrier)-H + biotin + 2 5'-deoxyadenosine + 2 L-methionine + 2 oxidized [2Fe-2S]-[ferredoxin]</text>
        <dbReference type="Rhea" id="RHEA:22060"/>
        <dbReference type="Rhea" id="RHEA-COMP:10000"/>
        <dbReference type="Rhea" id="RHEA-COMP:10001"/>
        <dbReference type="Rhea" id="RHEA-COMP:14737"/>
        <dbReference type="Rhea" id="RHEA-COMP:14739"/>
        <dbReference type="ChEBI" id="CHEBI:17319"/>
        <dbReference type="ChEBI" id="CHEBI:29917"/>
        <dbReference type="ChEBI" id="CHEBI:33737"/>
        <dbReference type="ChEBI" id="CHEBI:33738"/>
        <dbReference type="ChEBI" id="CHEBI:57586"/>
        <dbReference type="ChEBI" id="CHEBI:57844"/>
        <dbReference type="ChEBI" id="CHEBI:59789"/>
        <dbReference type="ChEBI" id="CHEBI:64428"/>
        <dbReference type="ChEBI" id="CHEBI:149473"/>
        <dbReference type="EC" id="2.8.1.6"/>
    </reaction>
</comment>
<comment type="cofactor">
    <cofactor evidence="1">
        <name>[4Fe-4S] cluster</name>
        <dbReference type="ChEBI" id="CHEBI:49883"/>
    </cofactor>
    <text evidence="1">Binds 1 [4Fe-4S] cluster. The cluster is coordinated with 3 cysteines and an exchangeable S-adenosyl-L-methionine.</text>
</comment>
<comment type="cofactor">
    <cofactor evidence="1">
        <name>[2Fe-2S] cluster</name>
        <dbReference type="ChEBI" id="CHEBI:190135"/>
    </cofactor>
    <text evidence="1">Binds 1 [2Fe-2S] cluster. The cluster is coordinated with 3 cysteines and 1 arginine.</text>
</comment>
<comment type="pathway">
    <text evidence="1">Cofactor biosynthesis; biotin biosynthesis; biotin from 7,8-diaminononanoate: step 2/2.</text>
</comment>
<comment type="subunit">
    <text evidence="1">Homodimer.</text>
</comment>
<comment type="similarity">
    <text evidence="1">Belongs to the radical SAM superfamily. Biotin synthase family.</text>
</comment>
<evidence type="ECO:0000255" key="1">
    <source>
        <dbReference type="HAMAP-Rule" id="MF_01694"/>
    </source>
</evidence>
<evidence type="ECO:0000255" key="2">
    <source>
        <dbReference type="PROSITE-ProRule" id="PRU01266"/>
    </source>
</evidence>
<feature type="chain" id="PRO_0000381555" description="Biotin synthase">
    <location>
        <begin position="1"/>
        <end position="352"/>
    </location>
</feature>
<feature type="domain" description="Radical SAM core" evidence="2">
    <location>
        <begin position="44"/>
        <end position="262"/>
    </location>
</feature>
<feature type="binding site" evidence="1">
    <location>
        <position position="59"/>
    </location>
    <ligand>
        <name>[4Fe-4S] cluster</name>
        <dbReference type="ChEBI" id="CHEBI:49883"/>
        <note>4Fe-4S-S-AdoMet</note>
    </ligand>
</feature>
<feature type="binding site" evidence="1">
    <location>
        <position position="63"/>
    </location>
    <ligand>
        <name>[4Fe-4S] cluster</name>
        <dbReference type="ChEBI" id="CHEBI:49883"/>
        <note>4Fe-4S-S-AdoMet</note>
    </ligand>
</feature>
<feature type="binding site" evidence="1">
    <location>
        <position position="66"/>
    </location>
    <ligand>
        <name>[4Fe-4S] cluster</name>
        <dbReference type="ChEBI" id="CHEBI:49883"/>
        <note>4Fe-4S-S-AdoMet</note>
    </ligand>
</feature>
<feature type="binding site" evidence="1">
    <location>
        <position position="103"/>
    </location>
    <ligand>
        <name>[2Fe-2S] cluster</name>
        <dbReference type="ChEBI" id="CHEBI:190135"/>
    </ligand>
</feature>
<feature type="binding site" evidence="1">
    <location>
        <position position="134"/>
    </location>
    <ligand>
        <name>[2Fe-2S] cluster</name>
        <dbReference type="ChEBI" id="CHEBI:190135"/>
    </ligand>
</feature>
<feature type="binding site" evidence="1">
    <location>
        <position position="194"/>
    </location>
    <ligand>
        <name>[2Fe-2S] cluster</name>
        <dbReference type="ChEBI" id="CHEBI:190135"/>
    </ligand>
</feature>
<feature type="binding site" evidence="1">
    <location>
        <position position="266"/>
    </location>
    <ligand>
        <name>[2Fe-2S] cluster</name>
        <dbReference type="ChEBI" id="CHEBI:190135"/>
    </ligand>
</feature>
<keyword id="KW-0001">2Fe-2S</keyword>
<keyword id="KW-0004">4Fe-4S</keyword>
<keyword id="KW-0093">Biotin biosynthesis</keyword>
<keyword id="KW-0408">Iron</keyword>
<keyword id="KW-0411">Iron-sulfur</keyword>
<keyword id="KW-0479">Metal-binding</keyword>
<keyword id="KW-1185">Reference proteome</keyword>
<keyword id="KW-0949">S-adenosyl-L-methionine</keyword>
<keyword id="KW-0808">Transferase</keyword>
<accession>Q9I618</accession>